<keyword id="KW-0966">Cell projection</keyword>
<keyword id="KW-0472">Membrane</keyword>
<keyword id="KW-1185">Reference proteome</keyword>
<keyword id="KW-0812">Transmembrane</keyword>
<keyword id="KW-1133">Transmembrane helix</keyword>
<sequence>MNLRGLFQDFNPSKFLIYACLLLFSVLLALRLDGIIQWSYWAVFAPIWLWKLMVIVGASVGTGVWARNPQYRAEGETCVEFKAMLIAVGIHLLLLMFEVLVCDRIERGSHFWLLVFMPLFFVSPVSVAACVWDFRHDRSLELEILCSVNILQFIFIALRLDKIIHWPWLVVCVPLWILMSFLCLVVLYYIVWSVLFLRSMDVIAEQRRTHITMALSWMTIVVPLLTFEILLVHKLDGHNAFSCIPIFVPLWLSLITLMATTFGQKGGNHWWFGIRKDFCQFLLEIFPFLREYGNISYDLHHEDNEETEETPVPEPPKIAPMFRKKARVVITQSPGKYALPPPKLNIEMPD</sequence>
<protein>
    <recommendedName>
        <fullName>Transmembrane protein 185A</fullName>
    </recommendedName>
    <alternativeName>
        <fullName>Protein FAM11A</fullName>
    </alternativeName>
</protein>
<organism>
    <name type="scientific">Pongo abelii</name>
    <name type="common">Sumatran orangutan</name>
    <name type="synonym">Pongo pygmaeus abelii</name>
    <dbReference type="NCBI Taxonomy" id="9601"/>
    <lineage>
        <taxon>Eukaryota</taxon>
        <taxon>Metazoa</taxon>
        <taxon>Chordata</taxon>
        <taxon>Craniata</taxon>
        <taxon>Vertebrata</taxon>
        <taxon>Euteleostomi</taxon>
        <taxon>Mammalia</taxon>
        <taxon>Eutheria</taxon>
        <taxon>Euarchontoglires</taxon>
        <taxon>Primates</taxon>
        <taxon>Haplorrhini</taxon>
        <taxon>Catarrhini</taxon>
        <taxon>Hominidae</taxon>
        <taxon>Pongo</taxon>
    </lineage>
</organism>
<proteinExistence type="evidence at transcript level"/>
<dbReference type="EMBL" id="CR859774">
    <property type="protein sequence ID" value="CAH91932.1"/>
    <property type="molecule type" value="mRNA"/>
</dbReference>
<dbReference type="RefSeq" id="NP_001126120.1">
    <property type="nucleotide sequence ID" value="NM_001132648.1"/>
</dbReference>
<dbReference type="STRING" id="9601.ENSPPYP00000023293"/>
<dbReference type="GeneID" id="100173076"/>
<dbReference type="KEGG" id="pon:100173076"/>
<dbReference type="CTD" id="84548"/>
<dbReference type="eggNOG" id="KOG3879">
    <property type="taxonomic scope" value="Eukaryota"/>
</dbReference>
<dbReference type="InParanoid" id="Q5R8H8"/>
<dbReference type="OrthoDB" id="9766050at2759"/>
<dbReference type="Proteomes" id="UP000001595">
    <property type="component" value="Unplaced"/>
</dbReference>
<dbReference type="GO" id="GO:0030425">
    <property type="term" value="C:dendrite"/>
    <property type="evidence" value="ECO:0000250"/>
    <property type="project" value="UniProtKB"/>
</dbReference>
<dbReference type="GO" id="GO:0016020">
    <property type="term" value="C:membrane"/>
    <property type="evidence" value="ECO:0007669"/>
    <property type="project" value="UniProtKB-SubCell"/>
</dbReference>
<dbReference type="InterPro" id="IPR019396">
    <property type="entry name" value="TM_Fragile-X-F-assoc"/>
</dbReference>
<dbReference type="PANTHER" id="PTHR13568">
    <property type="entry name" value="FAM11A, B PROTEIN"/>
    <property type="match status" value="1"/>
</dbReference>
<dbReference type="PANTHER" id="PTHR13568:SF2">
    <property type="entry name" value="TRANSMEMBRANE PROTEIN 185A"/>
    <property type="match status" value="1"/>
</dbReference>
<dbReference type="Pfam" id="PF10269">
    <property type="entry name" value="Tmemb_185A"/>
    <property type="match status" value="1"/>
</dbReference>
<evidence type="ECO:0000250" key="1"/>
<evidence type="ECO:0000255" key="2"/>
<evidence type="ECO:0000305" key="3"/>
<feature type="chain" id="PRO_0000188008" description="Transmembrane protein 185A">
    <location>
        <begin position="1"/>
        <end position="350"/>
    </location>
</feature>
<feature type="transmembrane region" description="Helical" evidence="2">
    <location>
        <begin position="16"/>
        <end position="36"/>
    </location>
</feature>
<feature type="transmembrane region" description="Helical" evidence="2">
    <location>
        <begin position="41"/>
        <end position="61"/>
    </location>
</feature>
<feature type="transmembrane region" description="Helical" evidence="2">
    <location>
        <begin position="81"/>
        <end position="101"/>
    </location>
</feature>
<feature type="transmembrane region" description="Helical" evidence="2">
    <location>
        <begin position="111"/>
        <end position="131"/>
    </location>
</feature>
<feature type="transmembrane region" description="Helical" evidence="2">
    <location>
        <begin position="177"/>
        <end position="197"/>
    </location>
</feature>
<feature type="transmembrane region" description="Helical" evidence="2">
    <location>
        <begin position="211"/>
        <end position="231"/>
    </location>
</feature>
<feature type="transmembrane region" description="Helical" evidence="2">
    <location>
        <begin position="240"/>
        <end position="260"/>
    </location>
</feature>
<feature type="region of interest" description="Mediates interaction with MAP1B" evidence="1">
    <location>
        <begin position="298"/>
        <end position="350"/>
    </location>
</feature>
<name>T185A_PONAB</name>
<gene>
    <name type="primary">TMEM185A</name>
    <name type="synonym">FAM11A</name>
</gene>
<accession>Q5R8H8</accession>
<reference key="1">
    <citation type="submission" date="2004-11" db="EMBL/GenBank/DDBJ databases">
        <authorList>
            <consortium name="The German cDNA consortium"/>
        </authorList>
    </citation>
    <scope>NUCLEOTIDE SEQUENCE [LARGE SCALE MRNA]</scope>
    <source>
        <tissue>Kidney</tissue>
    </source>
</reference>
<comment type="subunit">
    <text evidence="1">Interacts with MAP1B.</text>
</comment>
<comment type="subcellular location">
    <subcellularLocation>
        <location evidence="1">Cell projection</location>
        <location evidence="1">Dendrite</location>
    </subcellularLocation>
    <subcellularLocation>
        <location evidence="3">Membrane</location>
        <topology evidence="3">Multi-pass membrane protein</topology>
    </subcellularLocation>
</comment>
<comment type="similarity">
    <text evidence="3">Belongs to the TMEM185 family.</text>
</comment>